<gene>
    <name type="primary">CKB3</name>
    <name type="ordered locus">At3g60250</name>
    <name type="ORF">F27H5_40</name>
</gene>
<comment type="function">
    <text evidence="5 6 9">Plays a complex role in regulating the basal catalytic activity of the alpha subunit. The tetrameric holoenzyme CK2, composed of two alpha and two beta subunits, phosphorylates the transcription factor PIF1 after an exposure to light, resulting in a proteasome-dependent degradation of PIF1 and promotion of photomorphogenesis (PubMed:21330376). CK2 phosphorylates translation initiation factors. May participate in the regulation of the initiation of translation (PubMed:19509278). Stimulates the binding of CCA1 to promoters (Probable).</text>
</comment>
<comment type="subunit">
    <text evidence="3 5 7">Heterotetramer of two catalytic alpha subunits and two regulatory beta subunits (PubMed:19509278). Interacts with CCA1 (PubMed:9724822). Interacts with LHY (PubMed:10535927).</text>
</comment>
<comment type="interaction">
    <interactant intactId="EBI-1644873">
        <id>O81275</id>
    </interactant>
    <interactant intactId="EBI-1644880">
        <id>P92973</id>
        <label>CCA1</label>
    </interactant>
    <organismsDiffer>false</organismsDiffer>
    <experiments>6</experiments>
</comment>
<comment type="subcellular location">
    <subcellularLocation>
        <location evidence="4">Cytoplasm</location>
        <location evidence="4">Cytosol</location>
    </subcellularLocation>
    <subcellularLocation>
        <location evidence="4">Nucleus</location>
    </subcellularLocation>
</comment>
<comment type="alternative products">
    <event type="alternative splicing"/>
    <isoform>
        <id>O81275-1</id>
        <name>1</name>
        <sequence type="displayed"/>
    </isoform>
    <text>A number of isoforms are produced. According to EST sequences.</text>
</comment>
<comment type="PTM">
    <text evidence="1">Phosphorylated by alpha subunit.</text>
</comment>
<comment type="similarity">
    <text evidence="8">Belongs to the casein kinase 2 subunit beta family.</text>
</comment>
<name>CSK2D_ARATH</name>
<feature type="chain" id="PRO_0000068250" description="Casein kinase II subunit beta-3">
    <location>
        <begin position="1"/>
        <end position="276"/>
    </location>
</feature>
<feature type="region of interest" description="Disordered" evidence="2">
    <location>
        <begin position="1"/>
        <end position="22"/>
    </location>
</feature>
<feature type="region of interest" description="Disordered" evidence="2">
    <location>
        <begin position="34"/>
        <end position="86"/>
    </location>
</feature>
<proteinExistence type="evidence at protein level"/>
<keyword id="KW-0025">Alternative splicing</keyword>
<keyword id="KW-0963">Cytoplasm</keyword>
<keyword id="KW-0539">Nucleus</keyword>
<keyword id="KW-0597">Phosphoprotein</keyword>
<keyword id="KW-1185">Reference proteome</keyword>
<accession>O81275</accession>
<accession>Q24JI1</accession>
<protein>
    <recommendedName>
        <fullName>Casein kinase II subunit beta-3</fullName>
        <shortName>CK II beta-3</shortName>
    </recommendedName>
</protein>
<reference key="1">
    <citation type="journal article" date="1998" name="Proc. Natl. Acad. Sci. U.S.A.">
        <title>Protein kinase CK2 interacts with and phosphorylates the Arabidopsis circadian clock-associated 1 protein.</title>
        <authorList>
            <person name="Sugano S."/>
            <person name="Andronis C."/>
            <person name="Green R.M."/>
            <person name="Wang Z.-Y."/>
            <person name="Tobin E.M."/>
        </authorList>
    </citation>
    <scope>NUCLEOTIDE SEQUENCE [MRNA]</scope>
    <scope>INTERACTION WITH CCA1</scope>
</reference>
<reference key="2">
    <citation type="journal article" date="2000" name="Nature">
        <title>Sequence and analysis of chromosome 3 of the plant Arabidopsis thaliana.</title>
        <authorList>
            <person name="Salanoubat M."/>
            <person name="Lemcke K."/>
            <person name="Rieger M."/>
            <person name="Ansorge W."/>
            <person name="Unseld M."/>
            <person name="Fartmann B."/>
            <person name="Valle G."/>
            <person name="Bloecker H."/>
            <person name="Perez-Alonso M."/>
            <person name="Obermaier B."/>
            <person name="Delseny M."/>
            <person name="Boutry M."/>
            <person name="Grivell L.A."/>
            <person name="Mache R."/>
            <person name="Puigdomenech P."/>
            <person name="De Simone V."/>
            <person name="Choisne N."/>
            <person name="Artiguenave F."/>
            <person name="Robert C."/>
            <person name="Brottier P."/>
            <person name="Wincker P."/>
            <person name="Cattolico L."/>
            <person name="Weissenbach J."/>
            <person name="Saurin W."/>
            <person name="Quetier F."/>
            <person name="Schaefer M."/>
            <person name="Mueller-Auer S."/>
            <person name="Gabel C."/>
            <person name="Fuchs M."/>
            <person name="Benes V."/>
            <person name="Wurmbach E."/>
            <person name="Drzonek H."/>
            <person name="Erfle H."/>
            <person name="Jordan N."/>
            <person name="Bangert S."/>
            <person name="Wiedelmann R."/>
            <person name="Kranz H."/>
            <person name="Voss H."/>
            <person name="Holland R."/>
            <person name="Brandt P."/>
            <person name="Nyakatura G."/>
            <person name="Vezzi A."/>
            <person name="D'Angelo M."/>
            <person name="Pallavicini A."/>
            <person name="Toppo S."/>
            <person name="Simionati B."/>
            <person name="Conrad A."/>
            <person name="Hornischer K."/>
            <person name="Kauer G."/>
            <person name="Loehnert T.-H."/>
            <person name="Nordsiek G."/>
            <person name="Reichelt J."/>
            <person name="Scharfe M."/>
            <person name="Schoen O."/>
            <person name="Bargues M."/>
            <person name="Terol J."/>
            <person name="Climent J."/>
            <person name="Navarro P."/>
            <person name="Collado C."/>
            <person name="Perez-Perez A."/>
            <person name="Ottenwaelder B."/>
            <person name="Duchemin D."/>
            <person name="Cooke R."/>
            <person name="Laudie M."/>
            <person name="Berger-Llauro C."/>
            <person name="Purnelle B."/>
            <person name="Masuy D."/>
            <person name="de Haan M."/>
            <person name="Maarse A.C."/>
            <person name="Alcaraz J.-P."/>
            <person name="Cottet A."/>
            <person name="Casacuberta E."/>
            <person name="Monfort A."/>
            <person name="Argiriou A."/>
            <person name="Flores M."/>
            <person name="Liguori R."/>
            <person name="Vitale D."/>
            <person name="Mannhaupt G."/>
            <person name="Haase D."/>
            <person name="Schoof H."/>
            <person name="Rudd S."/>
            <person name="Zaccaria P."/>
            <person name="Mewes H.-W."/>
            <person name="Mayer K.F.X."/>
            <person name="Kaul S."/>
            <person name="Town C.D."/>
            <person name="Koo H.L."/>
            <person name="Tallon L.J."/>
            <person name="Jenkins J."/>
            <person name="Rooney T."/>
            <person name="Rizzo M."/>
            <person name="Walts A."/>
            <person name="Utterback T."/>
            <person name="Fujii C.Y."/>
            <person name="Shea T.P."/>
            <person name="Creasy T.H."/>
            <person name="Haas B."/>
            <person name="Maiti R."/>
            <person name="Wu D."/>
            <person name="Peterson J."/>
            <person name="Van Aken S."/>
            <person name="Pai G."/>
            <person name="Militscher J."/>
            <person name="Sellers P."/>
            <person name="Gill J.E."/>
            <person name="Feldblyum T.V."/>
            <person name="Preuss D."/>
            <person name="Lin X."/>
            <person name="Nierman W.C."/>
            <person name="Salzberg S.L."/>
            <person name="White O."/>
            <person name="Venter J.C."/>
            <person name="Fraser C.M."/>
            <person name="Kaneko T."/>
            <person name="Nakamura Y."/>
            <person name="Sato S."/>
            <person name="Kato T."/>
            <person name="Asamizu E."/>
            <person name="Sasamoto S."/>
            <person name="Kimura T."/>
            <person name="Idesawa K."/>
            <person name="Kawashima K."/>
            <person name="Kishida Y."/>
            <person name="Kiyokawa C."/>
            <person name="Kohara M."/>
            <person name="Matsumoto M."/>
            <person name="Matsuno A."/>
            <person name="Muraki A."/>
            <person name="Nakayama S."/>
            <person name="Nakazaki N."/>
            <person name="Shinpo S."/>
            <person name="Takeuchi C."/>
            <person name="Wada T."/>
            <person name="Watanabe A."/>
            <person name="Yamada M."/>
            <person name="Yasuda M."/>
            <person name="Tabata S."/>
        </authorList>
    </citation>
    <scope>NUCLEOTIDE SEQUENCE [LARGE SCALE GENOMIC DNA]</scope>
    <source>
        <strain>cv. Columbia</strain>
    </source>
</reference>
<reference key="3">
    <citation type="journal article" date="2017" name="Plant J.">
        <title>Araport11: a complete reannotation of the Arabidopsis thaliana reference genome.</title>
        <authorList>
            <person name="Cheng C.Y."/>
            <person name="Krishnakumar V."/>
            <person name="Chan A.P."/>
            <person name="Thibaud-Nissen F."/>
            <person name="Schobel S."/>
            <person name="Town C.D."/>
        </authorList>
    </citation>
    <scope>GENOME REANNOTATION</scope>
    <source>
        <strain>cv. Columbia</strain>
    </source>
</reference>
<reference key="4">
    <citation type="submission" date="2006-03" db="EMBL/GenBank/DDBJ databases">
        <title>Arabidopsis ORF clones.</title>
        <authorList>
            <person name="Shinn P."/>
            <person name="Chen H."/>
            <person name="Kim C.J."/>
            <person name="Ecker J.R."/>
        </authorList>
    </citation>
    <scope>NUCLEOTIDE SEQUENCE [LARGE SCALE MRNA]</scope>
    <source>
        <strain>cv. Columbia</strain>
    </source>
</reference>
<reference key="5">
    <citation type="submission" date="2006-07" db="EMBL/GenBank/DDBJ databases">
        <title>Large-scale analysis of RIKEN Arabidopsis full-length (RAFL) cDNAs.</title>
        <authorList>
            <person name="Totoki Y."/>
            <person name="Seki M."/>
            <person name="Ishida J."/>
            <person name="Nakajima M."/>
            <person name="Enju A."/>
            <person name="Kamiya A."/>
            <person name="Narusaka M."/>
            <person name="Shin-i T."/>
            <person name="Nakagawa M."/>
            <person name="Sakamoto N."/>
            <person name="Oishi K."/>
            <person name="Kohara Y."/>
            <person name="Kobayashi M."/>
            <person name="Toyoda A."/>
            <person name="Sakaki Y."/>
            <person name="Sakurai T."/>
            <person name="Iida K."/>
            <person name="Akiyama K."/>
            <person name="Satou M."/>
            <person name="Toyoda T."/>
            <person name="Konagaya A."/>
            <person name="Carninci P."/>
            <person name="Kawai J."/>
            <person name="Hayashizaki Y."/>
            <person name="Shinozaki K."/>
        </authorList>
    </citation>
    <scope>NUCLEOTIDE SEQUENCE [LARGE SCALE MRNA]</scope>
    <source>
        <strain>cv. Columbia</strain>
    </source>
</reference>
<reference key="6">
    <citation type="journal article" date="1999" name="Proc. Natl. Acad. Sci. U.S.A.">
        <title>The protein kinase CK2 is involved in regulation of circadian rhythms in Arabidopsis.</title>
        <authorList>
            <person name="Sugano S."/>
            <person name="Andronis C."/>
            <person name="Ong M.S."/>
            <person name="Green R.M."/>
            <person name="Tobin E.M."/>
        </authorList>
    </citation>
    <scope>INTERACTION WITH LHY</scope>
</reference>
<reference key="7">
    <citation type="journal article" date="2006" name="Plant Cell Physiol.">
        <title>An extensive survey of CK2 alpha and beta subunits in Arabidopsis: multiple isoforms exhibit differential subcellular localization.</title>
        <authorList>
            <person name="Salinas P."/>
            <person name="Fuentes D."/>
            <person name="Vidal E."/>
            <person name="Jordana X."/>
            <person name="Echeverria M."/>
            <person name="Holuigue L."/>
        </authorList>
    </citation>
    <scope>SUBCELLULAR LOCATION</scope>
</reference>
<reference key="8">
    <citation type="journal article" date="2009" name="J. Biol. Chem.">
        <title>Differential phosphorylation of plant translation initiation factors by Arabidopsis thaliana CK2 holoenzymes.</title>
        <authorList>
            <person name="Dennis M.D."/>
            <person name="Browning K.S."/>
        </authorList>
    </citation>
    <scope>FUNCTION</scope>
    <scope>SUBUNIT</scope>
</reference>
<reference key="9">
    <citation type="journal article" date="2011" name="J. Biol. Chem.">
        <title>Phosphorylation by CK2 enhances the rapid light-induced degradation of phytochrome interacting factor 1 in Arabidopsis.</title>
        <authorList>
            <person name="Bu Q."/>
            <person name="Zhu L."/>
            <person name="Dennis M.D."/>
            <person name="Yu L."/>
            <person name="Lu S.X."/>
            <person name="Person M.D."/>
            <person name="Tobin E.M."/>
            <person name="Browning K.S."/>
            <person name="Huq E."/>
        </authorList>
    </citation>
    <scope>FUNCTION</scope>
</reference>
<sequence>MYKERSGGGGGGSSRSEILGGAIDRKRINDALNKKLEKSSTSTTTSRVFSSKDKDPFSFTSTKTQLPDVESETDSEGSDVSGSEGDDTSWISWFCNLRGNDFFCEVDEDYIQDDFNLCGLSGQVPYYDYALDLILDVDASNSEMFTDEQHEMVESAAEMLYGLIHVRYILTTKGMAAMTEKYKNCDFGRCPRVFCCGQSCLPVGQSDIPRSSTVKIYCPKCEDISYPRSKFQGNIDGAYFGTTFPHLFLMTYGNLKPQKPTQSYVPKIFGFKVHKP</sequence>
<dbReference type="EMBL" id="AF068318">
    <property type="protein sequence ID" value="AAC33896.1"/>
    <property type="molecule type" value="mRNA"/>
</dbReference>
<dbReference type="EMBL" id="AL163852">
    <property type="protein sequence ID" value="CAB87862.1"/>
    <property type="molecule type" value="Genomic_DNA"/>
</dbReference>
<dbReference type="EMBL" id="CP002686">
    <property type="protein sequence ID" value="AEE80030.1"/>
    <property type="molecule type" value="Genomic_DNA"/>
</dbReference>
<dbReference type="EMBL" id="BT024908">
    <property type="protein sequence ID" value="ABD91499.1"/>
    <property type="molecule type" value="mRNA"/>
</dbReference>
<dbReference type="EMBL" id="AK229231">
    <property type="protein sequence ID" value="BAF01098.1"/>
    <property type="molecule type" value="mRNA"/>
</dbReference>
<dbReference type="PIR" id="T49220">
    <property type="entry name" value="T49220"/>
</dbReference>
<dbReference type="RefSeq" id="NP_191584.1">
    <molecule id="O81275-1"/>
    <property type="nucleotide sequence ID" value="NM_115889.5"/>
</dbReference>
<dbReference type="SMR" id="O81275"/>
<dbReference type="BioGRID" id="10510">
    <property type="interactions" value="7"/>
</dbReference>
<dbReference type="FunCoup" id="O81275">
    <property type="interactions" value="4618"/>
</dbReference>
<dbReference type="IntAct" id="O81275">
    <property type="interactions" value="3"/>
</dbReference>
<dbReference type="STRING" id="3702.O81275"/>
<dbReference type="iPTMnet" id="O81275"/>
<dbReference type="PaxDb" id="3702-AT3G60250.1"/>
<dbReference type="ProteomicsDB" id="220358">
    <molecule id="O81275-1"/>
</dbReference>
<dbReference type="EnsemblPlants" id="AT3G60250.1">
    <molecule id="O81275-1"/>
    <property type="protein sequence ID" value="AT3G60250.1"/>
    <property type="gene ID" value="AT3G60250"/>
</dbReference>
<dbReference type="GeneID" id="825196"/>
<dbReference type="Gramene" id="AT3G60250.1">
    <molecule id="O81275-1"/>
    <property type="protein sequence ID" value="AT3G60250.1"/>
    <property type="gene ID" value="AT3G60250"/>
</dbReference>
<dbReference type="KEGG" id="ath:AT3G60250"/>
<dbReference type="Araport" id="AT3G60250"/>
<dbReference type="TAIR" id="AT3G60250">
    <property type="gene designation" value="CKB3"/>
</dbReference>
<dbReference type="eggNOG" id="KOG3092">
    <property type="taxonomic scope" value="Eukaryota"/>
</dbReference>
<dbReference type="HOGENOM" id="CLU_034027_3_1_1"/>
<dbReference type="InParanoid" id="O81275"/>
<dbReference type="OMA" id="FPEMFLM"/>
<dbReference type="OrthoDB" id="3971593at2759"/>
<dbReference type="PhylomeDB" id="O81275"/>
<dbReference type="PRO" id="PR:O81275"/>
<dbReference type="Proteomes" id="UP000006548">
    <property type="component" value="Chromosome 3"/>
</dbReference>
<dbReference type="ExpressionAtlas" id="O81275">
    <property type="expression patterns" value="baseline and differential"/>
</dbReference>
<dbReference type="GO" id="GO:0005829">
    <property type="term" value="C:cytosol"/>
    <property type="evidence" value="ECO:0000314"/>
    <property type="project" value="UniProtKB"/>
</dbReference>
<dbReference type="GO" id="GO:0005634">
    <property type="term" value="C:nucleus"/>
    <property type="evidence" value="ECO:0000314"/>
    <property type="project" value="UniProtKB"/>
</dbReference>
<dbReference type="GO" id="GO:0005956">
    <property type="term" value="C:protein kinase CK2 complex"/>
    <property type="evidence" value="ECO:0000314"/>
    <property type="project" value="TAIR"/>
</dbReference>
<dbReference type="GO" id="GO:0019887">
    <property type="term" value="F:protein kinase regulator activity"/>
    <property type="evidence" value="ECO:0000314"/>
    <property type="project" value="TAIR"/>
</dbReference>
<dbReference type="GO" id="GO:0042752">
    <property type="term" value="P:regulation of circadian rhythm"/>
    <property type="evidence" value="ECO:0000315"/>
    <property type="project" value="TAIR"/>
</dbReference>
<dbReference type="FunFam" id="1.10.1820.10:FF:000002">
    <property type="entry name" value="Casein kinase II subunit beta"/>
    <property type="match status" value="1"/>
</dbReference>
<dbReference type="FunFam" id="2.20.25.20:FF:000003">
    <property type="entry name" value="Casein kinase II subunit beta"/>
    <property type="match status" value="1"/>
</dbReference>
<dbReference type="Gene3D" id="2.20.25.20">
    <property type="match status" value="1"/>
</dbReference>
<dbReference type="Gene3D" id="1.10.1820.10">
    <property type="entry name" value="protein kinase ck2 holoenzyme, chain C, domain 1"/>
    <property type="match status" value="1"/>
</dbReference>
<dbReference type="InterPro" id="IPR016149">
    <property type="entry name" value="Casein_kin_II_reg-sub_N"/>
</dbReference>
<dbReference type="InterPro" id="IPR035991">
    <property type="entry name" value="Casein_kinase_II_beta-like"/>
</dbReference>
<dbReference type="InterPro" id="IPR000704">
    <property type="entry name" value="Casein_kinase_II_reg-sub"/>
</dbReference>
<dbReference type="PANTHER" id="PTHR11740">
    <property type="entry name" value="CASEIN KINASE II SUBUNIT BETA"/>
    <property type="match status" value="1"/>
</dbReference>
<dbReference type="PANTHER" id="PTHR11740:SF22">
    <property type="entry name" value="CASEIN KINASE II SUBUNIT BETA-3"/>
    <property type="match status" value="1"/>
</dbReference>
<dbReference type="Pfam" id="PF01214">
    <property type="entry name" value="CK_II_beta"/>
    <property type="match status" value="1"/>
</dbReference>
<dbReference type="PRINTS" id="PR00472">
    <property type="entry name" value="CASNKINASEII"/>
</dbReference>
<dbReference type="SMART" id="SM01085">
    <property type="entry name" value="CK_II_beta"/>
    <property type="match status" value="1"/>
</dbReference>
<dbReference type="SUPFAM" id="SSF57798">
    <property type="entry name" value="Casein kinase II beta subunit"/>
    <property type="match status" value="1"/>
</dbReference>
<dbReference type="PROSITE" id="PS01101">
    <property type="entry name" value="CK2_BETA"/>
    <property type="match status" value="1"/>
</dbReference>
<evidence type="ECO:0000250" key="1"/>
<evidence type="ECO:0000256" key="2">
    <source>
        <dbReference type="SAM" id="MobiDB-lite"/>
    </source>
</evidence>
<evidence type="ECO:0000269" key="3">
    <source>
    </source>
</evidence>
<evidence type="ECO:0000269" key="4">
    <source>
    </source>
</evidence>
<evidence type="ECO:0000269" key="5">
    <source>
    </source>
</evidence>
<evidence type="ECO:0000269" key="6">
    <source>
    </source>
</evidence>
<evidence type="ECO:0000269" key="7">
    <source>
    </source>
</evidence>
<evidence type="ECO:0000305" key="8"/>
<evidence type="ECO:0000305" key="9">
    <source>
    </source>
</evidence>
<organism>
    <name type="scientific">Arabidopsis thaliana</name>
    <name type="common">Mouse-ear cress</name>
    <dbReference type="NCBI Taxonomy" id="3702"/>
    <lineage>
        <taxon>Eukaryota</taxon>
        <taxon>Viridiplantae</taxon>
        <taxon>Streptophyta</taxon>
        <taxon>Embryophyta</taxon>
        <taxon>Tracheophyta</taxon>
        <taxon>Spermatophyta</taxon>
        <taxon>Magnoliopsida</taxon>
        <taxon>eudicotyledons</taxon>
        <taxon>Gunneridae</taxon>
        <taxon>Pentapetalae</taxon>
        <taxon>rosids</taxon>
        <taxon>malvids</taxon>
        <taxon>Brassicales</taxon>
        <taxon>Brassicaceae</taxon>
        <taxon>Camelineae</taxon>
        <taxon>Arabidopsis</taxon>
    </lineage>
</organism>